<sequence>MFVEGFRVESPRVRYGDGEIESEYRYDTTEVVAPPSPEKGWVVRPKSVTYHFKTTTTVPKLGVMLVGWGGNNGTTLTAGVIANREGISWATKEKVHKANYFGSLTQSSTIRVGSYNGEEIYAPFKSLVPMVNPNDIVFGGWDISSMNLADAMTRARVLDIDLQKQLRHHMESMVPLPGVYNPDFIAANQGSRANNVIKGTKKEQVEQVKKDIREFKEKSKVDKVVVLWTANTERYSNVVAGMNDTMDNLLASLDKDEPEMSPSTLYAIACVMEGVPFINGSPQNTFVPGLIELAIKKNSVIGGDDFKSGQTKMKSVLVDFLVGAGIKPTSIASYNHLGNNDGMNLSAPQTFRSKEISKSGVVDDMVSSNAILYEPGEHPDHVIVIKYIPYVGDSKRAMDEYTSEIFMGGKNTIVLHNTCEDSLLAAPIILDLVLLAELSTRIQLKAEDQDKYHSFHPVATILSYLSKAPLVPPGTPVVNALAKQRAMLENILRACVGLAPENNMMLEYK</sequence>
<comment type="function">
    <text evidence="1 2">Key enzyme in myo-inositol biosynthesis pathway that catalyzes the conversion of glucose 6-phosphate to 1-myo-inositol 1-phosphate in a NAD-dependent manner (By similarity). Is a key enzyme in the phytic acid biosynthesis pathway in seeds (By similarity).</text>
</comment>
<comment type="catalytic activity">
    <reaction evidence="6">
        <text>D-glucose 6-phosphate = 1D-myo-inositol 3-phosphate</text>
        <dbReference type="Rhea" id="RHEA:10716"/>
        <dbReference type="ChEBI" id="CHEBI:58401"/>
        <dbReference type="ChEBI" id="CHEBI:61548"/>
        <dbReference type="EC" id="5.5.1.4"/>
    </reaction>
</comment>
<comment type="cofactor">
    <cofactor evidence="6">
        <name>NAD(+)</name>
        <dbReference type="ChEBI" id="CHEBI:57540"/>
    </cofactor>
</comment>
<comment type="pathway">
    <text evidence="6">Polyol metabolism; myo-inositol biosynthesis; myo-inositol from D-glucose 6-phosphate: step 1/2.</text>
</comment>
<comment type="subcellular location">
    <subcellularLocation>
        <location evidence="3">Cytoplasm</location>
    </subcellularLocation>
</comment>
<comment type="tissue specificity">
    <text evidence="4">Highly expressed in anthers, but transcripts are undetectable in roots, leaves, flowers and embryos.</text>
</comment>
<comment type="similarity">
    <text evidence="6">Belongs to the myo-inositol 1-phosphate synthase family.</text>
</comment>
<feature type="chain" id="PRO_0000441031" description="Inositol-3-phosphate synthase 1">
    <location>
        <begin position="1"/>
        <end position="509"/>
    </location>
</feature>
<gene>
    <name evidence="5" type="primary">RINO2</name>
    <name evidence="6" type="synonym">INO1-2</name>
    <name evidence="9" type="ordered locus">Os10g0369900</name>
    <name evidence="8" type="ordered locus">LOC_Os10g22450</name>
    <name evidence="7" type="ORF">OJ1003C07.7</name>
    <name evidence="10" type="ORF">OsJ_31267</name>
</gene>
<organism>
    <name type="scientific">Oryza sativa subsp. japonica</name>
    <name type="common">Rice</name>
    <dbReference type="NCBI Taxonomy" id="39947"/>
    <lineage>
        <taxon>Eukaryota</taxon>
        <taxon>Viridiplantae</taxon>
        <taxon>Streptophyta</taxon>
        <taxon>Embryophyta</taxon>
        <taxon>Tracheophyta</taxon>
        <taxon>Spermatophyta</taxon>
        <taxon>Magnoliopsida</taxon>
        <taxon>Liliopsida</taxon>
        <taxon>Poales</taxon>
        <taxon>Poaceae</taxon>
        <taxon>BOP clade</taxon>
        <taxon>Oryzoideae</taxon>
        <taxon>Oryzeae</taxon>
        <taxon>Oryzinae</taxon>
        <taxon>Oryza</taxon>
        <taxon>Oryza sativa</taxon>
    </lineage>
</organism>
<accession>Q8S5N2</accession>
<reference key="1">
    <citation type="journal article" date="2003" name="Science">
        <title>In-depth view of structure, activity, and evolution of rice chromosome 10.</title>
        <authorList>
            <person name="Yu Y."/>
            <person name="Rambo T."/>
            <person name="Currie J."/>
            <person name="Saski C."/>
            <person name="Kim H.-R."/>
            <person name="Collura K."/>
            <person name="Thompson S."/>
            <person name="Simmons J."/>
            <person name="Yang T.-J."/>
            <person name="Nah G."/>
            <person name="Patel A.J."/>
            <person name="Thurmond S."/>
            <person name="Henry D."/>
            <person name="Oates R."/>
            <person name="Palmer M."/>
            <person name="Pries G."/>
            <person name="Gibson J."/>
            <person name="Anderson H."/>
            <person name="Paradkar M."/>
            <person name="Crane L."/>
            <person name="Dale J."/>
            <person name="Carver M.B."/>
            <person name="Wood T."/>
            <person name="Frisch D."/>
            <person name="Engler F."/>
            <person name="Soderlund C."/>
            <person name="Palmer L.E."/>
            <person name="Teytelman L."/>
            <person name="Nascimento L."/>
            <person name="De la Bastide M."/>
            <person name="Spiegel L."/>
            <person name="Ware D."/>
            <person name="O'Shaughnessy A."/>
            <person name="Dike S."/>
            <person name="Dedhia N."/>
            <person name="Preston R."/>
            <person name="Huang E."/>
            <person name="Ferraro K."/>
            <person name="Kuit K."/>
            <person name="Miller B."/>
            <person name="Zutavern T."/>
            <person name="Katzenberger F."/>
            <person name="Muller S."/>
            <person name="Balija V."/>
            <person name="Martienssen R.A."/>
            <person name="Stein L."/>
            <person name="Minx P."/>
            <person name="Johnson D."/>
            <person name="Cordum H."/>
            <person name="Mardis E."/>
            <person name="Cheng Z."/>
            <person name="Jiang J."/>
            <person name="Wilson R."/>
            <person name="McCombie W.R."/>
            <person name="Wing R.A."/>
            <person name="Yuan Q."/>
            <person name="Ouyang S."/>
            <person name="Liu J."/>
            <person name="Jones K.M."/>
            <person name="Gansberger K."/>
            <person name="Moffat K."/>
            <person name="Hill J."/>
            <person name="Tsitrin T."/>
            <person name="Overton L."/>
            <person name="Bera J."/>
            <person name="Kim M."/>
            <person name="Jin S."/>
            <person name="Tallon L."/>
            <person name="Ciecko A."/>
            <person name="Pai G."/>
            <person name="Van Aken S."/>
            <person name="Utterback T."/>
            <person name="Reidmuller S."/>
            <person name="Bormann J."/>
            <person name="Feldblyum T."/>
            <person name="Hsiao J."/>
            <person name="Zismann V."/>
            <person name="Blunt S."/>
            <person name="de Vazeille A.R."/>
            <person name="Shaffer T."/>
            <person name="Koo H."/>
            <person name="Suh B."/>
            <person name="Yang Q."/>
            <person name="Haas B."/>
            <person name="Peterson J."/>
            <person name="Pertea M."/>
            <person name="Volfovsky N."/>
            <person name="Wortman J."/>
            <person name="White O."/>
            <person name="Salzberg S.L."/>
            <person name="Fraser C.M."/>
            <person name="Buell C.R."/>
            <person name="Messing J."/>
            <person name="Song R."/>
            <person name="Fuks G."/>
            <person name="Llaca V."/>
            <person name="Kovchak S."/>
            <person name="Young S."/>
            <person name="Bowers J.E."/>
            <person name="Paterson A.H."/>
            <person name="Johns M.A."/>
            <person name="Mao L."/>
            <person name="Pan H."/>
            <person name="Dean R.A."/>
        </authorList>
    </citation>
    <scope>NUCLEOTIDE SEQUENCE [LARGE SCALE GENOMIC DNA]</scope>
    <source>
        <strain>cv. Nipponbare</strain>
    </source>
</reference>
<reference key="2">
    <citation type="journal article" date="2005" name="Nature">
        <title>The map-based sequence of the rice genome.</title>
        <authorList>
            <consortium name="International rice genome sequencing project (IRGSP)"/>
        </authorList>
    </citation>
    <scope>NUCLEOTIDE SEQUENCE [LARGE SCALE GENOMIC DNA]</scope>
    <source>
        <strain>cv. Nipponbare</strain>
    </source>
</reference>
<reference key="3">
    <citation type="journal article" date="2008" name="Nucleic Acids Res.">
        <title>The rice annotation project database (RAP-DB): 2008 update.</title>
        <authorList>
            <consortium name="The rice annotation project (RAP)"/>
        </authorList>
    </citation>
    <scope>GENOME REANNOTATION</scope>
    <source>
        <strain>cv. Nipponbare</strain>
    </source>
</reference>
<reference key="4">
    <citation type="journal article" date="2013" name="Rice">
        <title>Improvement of the Oryza sativa Nipponbare reference genome using next generation sequence and optical map data.</title>
        <authorList>
            <person name="Kawahara Y."/>
            <person name="de la Bastide M."/>
            <person name="Hamilton J.P."/>
            <person name="Kanamori H."/>
            <person name="McCombie W.R."/>
            <person name="Ouyang S."/>
            <person name="Schwartz D.C."/>
            <person name="Tanaka T."/>
            <person name="Wu J."/>
            <person name="Zhou S."/>
            <person name="Childs K.L."/>
            <person name="Davidson R.M."/>
            <person name="Lin H."/>
            <person name="Quesada-Ocampo L."/>
            <person name="Vaillancourt B."/>
            <person name="Sakai H."/>
            <person name="Lee S.S."/>
            <person name="Kim J."/>
            <person name="Numa H."/>
            <person name="Itoh T."/>
            <person name="Buell C.R."/>
            <person name="Matsumoto T."/>
        </authorList>
    </citation>
    <scope>GENOME REANNOTATION</scope>
    <source>
        <strain>cv. Nipponbare</strain>
    </source>
</reference>
<reference key="5">
    <citation type="journal article" date="2005" name="PLoS Biol.">
        <title>The genomes of Oryza sativa: a history of duplications.</title>
        <authorList>
            <person name="Yu J."/>
            <person name="Wang J."/>
            <person name="Lin W."/>
            <person name="Li S."/>
            <person name="Li H."/>
            <person name="Zhou J."/>
            <person name="Ni P."/>
            <person name="Dong W."/>
            <person name="Hu S."/>
            <person name="Zeng C."/>
            <person name="Zhang J."/>
            <person name="Zhang Y."/>
            <person name="Li R."/>
            <person name="Xu Z."/>
            <person name="Li S."/>
            <person name="Li X."/>
            <person name="Zheng H."/>
            <person name="Cong L."/>
            <person name="Lin L."/>
            <person name="Yin J."/>
            <person name="Geng J."/>
            <person name="Li G."/>
            <person name="Shi J."/>
            <person name="Liu J."/>
            <person name="Lv H."/>
            <person name="Li J."/>
            <person name="Wang J."/>
            <person name="Deng Y."/>
            <person name="Ran L."/>
            <person name="Shi X."/>
            <person name="Wang X."/>
            <person name="Wu Q."/>
            <person name="Li C."/>
            <person name="Ren X."/>
            <person name="Wang J."/>
            <person name="Wang X."/>
            <person name="Li D."/>
            <person name="Liu D."/>
            <person name="Zhang X."/>
            <person name="Ji Z."/>
            <person name="Zhao W."/>
            <person name="Sun Y."/>
            <person name="Zhang Z."/>
            <person name="Bao J."/>
            <person name="Han Y."/>
            <person name="Dong L."/>
            <person name="Ji J."/>
            <person name="Chen P."/>
            <person name="Wu S."/>
            <person name="Liu J."/>
            <person name="Xiao Y."/>
            <person name="Bu D."/>
            <person name="Tan J."/>
            <person name="Yang L."/>
            <person name="Ye C."/>
            <person name="Zhang J."/>
            <person name="Xu J."/>
            <person name="Zhou Y."/>
            <person name="Yu Y."/>
            <person name="Zhang B."/>
            <person name="Zhuang S."/>
            <person name="Wei H."/>
            <person name="Liu B."/>
            <person name="Lei M."/>
            <person name="Yu H."/>
            <person name="Li Y."/>
            <person name="Xu H."/>
            <person name="Wei S."/>
            <person name="He X."/>
            <person name="Fang L."/>
            <person name="Zhang Z."/>
            <person name="Zhang Y."/>
            <person name="Huang X."/>
            <person name="Su Z."/>
            <person name="Tong W."/>
            <person name="Li J."/>
            <person name="Tong Z."/>
            <person name="Li S."/>
            <person name="Ye J."/>
            <person name="Wang L."/>
            <person name="Fang L."/>
            <person name="Lei T."/>
            <person name="Chen C.-S."/>
            <person name="Chen H.-C."/>
            <person name="Xu Z."/>
            <person name="Li H."/>
            <person name="Huang H."/>
            <person name="Zhang F."/>
            <person name="Xu H."/>
            <person name="Li N."/>
            <person name="Zhao C."/>
            <person name="Li S."/>
            <person name="Dong L."/>
            <person name="Huang Y."/>
            <person name="Li L."/>
            <person name="Xi Y."/>
            <person name="Qi Q."/>
            <person name="Li W."/>
            <person name="Zhang B."/>
            <person name="Hu W."/>
            <person name="Zhang Y."/>
            <person name="Tian X."/>
            <person name="Jiao Y."/>
            <person name="Liang X."/>
            <person name="Jin J."/>
            <person name="Gao L."/>
            <person name="Zheng W."/>
            <person name="Hao B."/>
            <person name="Liu S.-M."/>
            <person name="Wang W."/>
            <person name="Yuan L."/>
            <person name="Cao M."/>
            <person name="McDermott J."/>
            <person name="Samudrala R."/>
            <person name="Wang J."/>
            <person name="Wong G.K.-S."/>
            <person name="Yang H."/>
        </authorList>
    </citation>
    <scope>NUCLEOTIDE SEQUENCE [LARGE SCALE GENOMIC DNA]</scope>
    <source>
        <strain>cv. Nipponbare</strain>
    </source>
</reference>
<reference key="6">
    <citation type="journal article" date="2007" name="Gene">
        <title>Expression pattern of inositol phosphate-related enzymes in rice (Oryza sativa L.): implications for the phytic acid biosynthetic pathway.</title>
        <authorList>
            <person name="Suzuki M."/>
            <person name="Tanaka K."/>
            <person name="Kuwano M."/>
            <person name="Yoshida K.T."/>
        </authorList>
    </citation>
    <scope>TISSUE SPECIFICITY</scope>
</reference>
<protein>
    <recommendedName>
        <fullName evidence="6">Inositol-3-phosphate synthase 1</fullName>
        <shortName evidence="6">MIP synthase 1</shortName>
        <ecNumber evidence="6">5.5.1.4</ecNumber>
    </recommendedName>
    <alternativeName>
        <fullName evidence="6">Myo-inositol 1-phosphate synthase</fullName>
        <shortName evidence="6">IPS</shortName>
        <shortName evidence="6">MI-1-P synthase</shortName>
    </alternativeName>
    <alternativeName>
        <fullName evidence="6">OsINO1-2</fullName>
    </alternativeName>
</protein>
<proteinExistence type="evidence at transcript level"/>
<evidence type="ECO:0000250" key="1">
    <source>
        <dbReference type="UniProtKB" id="O64437"/>
    </source>
</evidence>
<evidence type="ECO:0000250" key="2">
    <source>
        <dbReference type="UniProtKB" id="P42801"/>
    </source>
</evidence>
<evidence type="ECO:0000250" key="3">
    <source>
        <dbReference type="UniProtKB" id="Q38862"/>
    </source>
</evidence>
<evidence type="ECO:0000269" key="4">
    <source>
    </source>
</evidence>
<evidence type="ECO:0000303" key="5">
    <source>
    </source>
</evidence>
<evidence type="ECO:0000305" key="6"/>
<evidence type="ECO:0000312" key="7">
    <source>
        <dbReference type="EMBL" id="AAM08827.1"/>
    </source>
</evidence>
<evidence type="ECO:0000312" key="8">
    <source>
        <dbReference type="EMBL" id="AAP53373.1"/>
    </source>
</evidence>
<evidence type="ECO:0000312" key="9">
    <source>
        <dbReference type="EMBL" id="BAF26368.1"/>
    </source>
</evidence>
<evidence type="ECO:0000312" key="10">
    <source>
        <dbReference type="EMBL" id="EAZ15847.1"/>
    </source>
</evidence>
<name>RINO2_ORYSJ</name>
<keyword id="KW-0963">Cytoplasm</keyword>
<keyword id="KW-0398">Inositol biosynthesis</keyword>
<keyword id="KW-0413">Isomerase</keyword>
<keyword id="KW-0444">Lipid biosynthesis</keyword>
<keyword id="KW-0443">Lipid metabolism</keyword>
<keyword id="KW-0520">NAD</keyword>
<keyword id="KW-0594">Phospholipid biosynthesis</keyword>
<keyword id="KW-1208">Phospholipid metabolism</keyword>
<keyword id="KW-1185">Reference proteome</keyword>
<dbReference type="EC" id="5.5.1.4" evidence="6"/>
<dbReference type="EMBL" id="AC113335">
    <property type="protein sequence ID" value="AAM08827.1"/>
    <property type="molecule type" value="Genomic_DNA"/>
</dbReference>
<dbReference type="EMBL" id="DP000086">
    <property type="protein sequence ID" value="AAP53373.1"/>
    <property type="molecule type" value="Genomic_DNA"/>
</dbReference>
<dbReference type="EMBL" id="AP008216">
    <property type="protein sequence ID" value="BAF26368.1"/>
    <property type="molecule type" value="Genomic_DNA"/>
</dbReference>
<dbReference type="EMBL" id="AP014966">
    <property type="protein sequence ID" value="BAT10553.1"/>
    <property type="molecule type" value="Genomic_DNA"/>
</dbReference>
<dbReference type="EMBL" id="CM000147">
    <property type="protein sequence ID" value="EAZ15847.1"/>
    <property type="molecule type" value="Genomic_DNA"/>
</dbReference>
<dbReference type="RefSeq" id="XP_015614733.1">
    <property type="nucleotide sequence ID" value="XM_015759247.1"/>
</dbReference>
<dbReference type="SMR" id="Q8S5N2"/>
<dbReference type="FunCoup" id="Q8S5N2">
    <property type="interactions" value="1857"/>
</dbReference>
<dbReference type="STRING" id="39947.Q8S5N2"/>
<dbReference type="PaxDb" id="39947-Q8S5N2"/>
<dbReference type="EnsemblPlants" id="Os10t0369900-01">
    <property type="protein sequence ID" value="Os10t0369900-01"/>
    <property type="gene ID" value="Os10g0369900"/>
</dbReference>
<dbReference type="Gramene" id="Os10t0369900-01">
    <property type="protein sequence ID" value="Os10t0369900-01"/>
    <property type="gene ID" value="Os10g0369900"/>
</dbReference>
<dbReference type="KEGG" id="dosa:Os10g0369900"/>
<dbReference type="eggNOG" id="KOG0693">
    <property type="taxonomic scope" value="Eukaryota"/>
</dbReference>
<dbReference type="HOGENOM" id="CLU_021486_2_0_1"/>
<dbReference type="InParanoid" id="Q8S5N2"/>
<dbReference type="OMA" id="NNMILEH"/>
<dbReference type="OrthoDB" id="2887at2759"/>
<dbReference type="BRENDA" id="5.5.1.4">
    <property type="organism ID" value="4460"/>
</dbReference>
<dbReference type="UniPathway" id="UPA00823">
    <property type="reaction ID" value="UER00787"/>
</dbReference>
<dbReference type="Proteomes" id="UP000000763">
    <property type="component" value="Chromosome 10"/>
</dbReference>
<dbReference type="Proteomes" id="UP000007752">
    <property type="component" value="Chromosome 10"/>
</dbReference>
<dbReference type="Proteomes" id="UP000059680">
    <property type="component" value="Chromosome 10"/>
</dbReference>
<dbReference type="GO" id="GO:0005737">
    <property type="term" value="C:cytoplasm"/>
    <property type="evidence" value="ECO:0000318"/>
    <property type="project" value="GO_Central"/>
</dbReference>
<dbReference type="GO" id="GO:0004512">
    <property type="term" value="F:inositol-3-phosphate synthase activity"/>
    <property type="evidence" value="ECO:0000318"/>
    <property type="project" value="GO_Central"/>
</dbReference>
<dbReference type="GO" id="GO:0006021">
    <property type="term" value="P:inositol biosynthetic process"/>
    <property type="evidence" value="ECO:0000318"/>
    <property type="project" value="GO_Central"/>
</dbReference>
<dbReference type="GO" id="GO:0008654">
    <property type="term" value="P:phospholipid biosynthetic process"/>
    <property type="evidence" value="ECO:0007669"/>
    <property type="project" value="UniProtKB-KW"/>
</dbReference>
<dbReference type="FunFam" id="3.40.50.720:FF:000107">
    <property type="entry name" value="inositol-3-phosphate synthase"/>
    <property type="match status" value="1"/>
</dbReference>
<dbReference type="FunFam" id="3.40.50.720:FF:000069">
    <property type="entry name" value="Inositol-3-phosphate synthase 1"/>
    <property type="match status" value="1"/>
</dbReference>
<dbReference type="FunFam" id="3.30.360.10:FF:000055">
    <property type="entry name" value="Putative myo-inositol-1-phosphate synthase"/>
    <property type="match status" value="1"/>
</dbReference>
<dbReference type="Gene3D" id="3.40.50.720">
    <property type="entry name" value="NAD(P)-binding Rossmann-like Domain"/>
    <property type="match status" value="2"/>
</dbReference>
<dbReference type="InterPro" id="IPR002587">
    <property type="entry name" value="Myo-inos-1-P_Synthase"/>
</dbReference>
<dbReference type="InterPro" id="IPR013021">
    <property type="entry name" value="Myo-inos-1-P_Synthase_GAPDH"/>
</dbReference>
<dbReference type="InterPro" id="IPR036291">
    <property type="entry name" value="NAD(P)-bd_dom_sf"/>
</dbReference>
<dbReference type="PANTHER" id="PTHR11510">
    <property type="entry name" value="MYO-INOSITOL-1 PHOSPHATE SYNTHASE"/>
    <property type="match status" value="1"/>
</dbReference>
<dbReference type="Pfam" id="PF01658">
    <property type="entry name" value="Inos-1-P_synth"/>
    <property type="match status" value="1"/>
</dbReference>
<dbReference type="Pfam" id="PF07994">
    <property type="entry name" value="NAD_binding_5"/>
    <property type="match status" value="1"/>
</dbReference>
<dbReference type="PIRSF" id="PIRSF015578">
    <property type="entry name" value="Myoinos-ppht_syn"/>
    <property type="match status" value="1"/>
</dbReference>
<dbReference type="SUPFAM" id="SSF55347">
    <property type="entry name" value="Glyceraldehyde-3-phosphate dehydrogenase-like, C-terminal domain"/>
    <property type="match status" value="1"/>
</dbReference>
<dbReference type="SUPFAM" id="SSF51735">
    <property type="entry name" value="NAD(P)-binding Rossmann-fold domains"/>
    <property type="match status" value="1"/>
</dbReference>